<name>TRI1_STRCO</name>
<reference key="1">
    <citation type="journal article" date="2002" name="Nature">
        <title>Complete genome sequence of the model actinomycete Streptomyces coelicolor A3(2).</title>
        <authorList>
            <person name="Bentley S.D."/>
            <person name="Chater K.F."/>
            <person name="Cerdeno-Tarraga A.-M."/>
            <person name="Challis G.L."/>
            <person name="Thomson N.R."/>
            <person name="James K.D."/>
            <person name="Harris D.E."/>
            <person name="Quail M.A."/>
            <person name="Kieser H."/>
            <person name="Harper D."/>
            <person name="Bateman A."/>
            <person name="Brown S."/>
            <person name="Chandra G."/>
            <person name="Chen C.W."/>
            <person name="Collins M."/>
            <person name="Cronin A."/>
            <person name="Fraser A."/>
            <person name="Goble A."/>
            <person name="Hidalgo J."/>
            <person name="Hornsby T."/>
            <person name="Howarth S."/>
            <person name="Huang C.-H."/>
            <person name="Kieser T."/>
            <person name="Larke L."/>
            <person name="Murphy L.D."/>
            <person name="Oliver K."/>
            <person name="O'Neil S."/>
            <person name="Rabbinowitsch E."/>
            <person name="Rajandream M.A."/>
            <person name="Rutherford K.M."/>
            <person name="Rutter S."/>
            <person name="Seeger K."/>
            <person name="Saunders D."/>
            <person name="Sharp S."/>
            <person name="Squares R."/>
            <person name="Squares S."/>
            <person name="Taylor K."/>
            <person name="Warren T."/>
            <person name="Wietzorrek A."/>
            <person name="Woodward J.R."/>
            <person name="Barrell B.G."/>
            <person name="Parkhill J."/>
            <person name="Hopwood D.A."/>
        </authorList>
    </citation>
    <scope>NUCLEOTIDE SEQUENCE [LARGE SCALE GENOMIC DNA]</scope>
    <source>
        <strain>ATCC BAA-471 / A3(2) / M145</strain>
    </source>
</reference>
<reference key="2">
    <citation type="journal article" date="2001" name="Biol. Chem.">
        <title>Tricorn protease in bacteria: characterization of the enzyme from Streptomyces coelicolor.</title>
        <authorList>
            <person name="Tamura N."/>
            <person name="Pfeifer G."/>
            <person name="Baumeister W."/>
            <person name="Tamura T."/>
        </authorList>
    </citation>
    <scope>CHARACTERIZATION</scope>
    <source>
        <strain>A3(2) / NRRL B-16638</strain>
    </source>
</reference>
<accession>Q9RDE2</accession>
<gene>
    <name type="primary">tri1</name>
    <name type="ordered locus">SCO2549</name>
    <name type="ORF">SCC77.16c</name>
</gene>
<organism>
    <name type="scientific">Streptomyces coelicolor (strain ATCC BAA-471 / A3(2) / M145)</name>
    <dbReference type="NCBI Taxonomy" id="100226"/>
    <lineage>
        <taxon>Bacteria</taxon>
        <taxon>Bacillati</taxon>
        <taxon>Actinomycetota</taxon>
        <taxon>Actinomycetes</taxon>
        <taxon>Kitasatosporales</taxon>
        <taxon>Streptomycetaceae</taxon>
        <taxon>Streptomyces</taxon>
        <taxon>Streptomyces albidoflavus group</taxon>
    </lineage>
</organism>
<feature type="chain" id="PRO_0000207199" description="Tricorn protease homolog 1">
    <location>
        <begin position="1"/>
        <end position="1067"/>
    </location>
</feature>
<feature type="region of interest" description="Disordered" evidence="3">
    <location>
        <begin position="518"/>
        <end position="551"/>
    </location>
</feature>
<feature type="region of interest" description="PDZ-like">
    <location>
        <begin position="754"/>
        <end position="851"/>
    </location>
</feature>
<feature type="compositionally biased region" description="Basic and acidic residues" evidence="3">
    <location>
        <begin position="530"/>
        <end position="540"/>
    </location>
</feature>
<feature type="active site" description="Charge relay system" evidence="1">
    <location>
        <position position="740"/>
    </location>
</feature>
<feature type="active site" description="Nucleophile" evidence="2">
    <location>
        <position position="961"/>
    </location>
</feature>
<feature type="active site" description="Charge relay system" evidence="2">
    <location>
        <position position="1019"/>
    </location>
</feature>
<feature type="binding site" evidence="2">
    <location>
        <position position="914"/>
    </location>
    <ligand>
        <name>substrate</name>
    </ligand>
</feature>
<feature type="site" description="Transition state stabilizer; via amide nitrogen" evidence="2">
    <location>
        <position position="962"/>
    </location>
</feature>
<comment type="function">
    <text evidence="1">Degrades oligopeptides in a sequential manner.</text>
</comment>
<comment type="activity regulation">
    <text>Stimulated by MgCl2.</text>
</comment>
<comment type="biophysicochemical properties">
    <phDependence>
        <text>Optimum pH is 7.5-7.8.</text>
    </phDependence>
    <temperatureDependence>
        <text>Optimum temperature is 37 degrees Celsius.</text>
    </temperatureDependence>
</comment>
<comment type="subunit">
    <text>Forms a homohexameric complex; it is not known if it assembles into higher-order structures.</text>
</comment>
<comment type="subcellular location">
    <subcellularLocation>
        <location evidence="1">Cytoplasm</location>
    </subcellularLocation>
</comment>
<comment type="similarity">
    <text evidence="4">Belongs to the peptidase S41B family.</text>
</comment>
<protein>
    <recommendedName>
        <fullName>Tricorn protease homolog 1</fullName>
        <ecNumber>3.4.21.-</ecNumber>
    </recommendedName>
</protein>
<proteinExistence type="evidence at protein level"/>
<keyword id="KW-0963">Cytoplasm</keyword>
<keyword id="KW-0378">Hydrolase</keyword>
<keyword id="KW-0645">Protease</keyword>
<keyword id="KW-1185">Reference proteome</keyword>
<keyword id="KW-0720">Serine protease</keyword>
<sequence length="1067" mass="115647">MGVTQPAAPAYLRFPHPHGELVAFTAEDDVWLAPLDGGRAWRVSADNVPVNHPRISPDGTKVAWTSTRDGAPEVHVAPVEGGPAKRLTHWGSIRTQVRGWTADGRVLALSTYGQASLRRSWARALPLDGGPATTLPYGPVGDVAQGPHTVLLSAPMGREAAWWKRYRGGTAGKLWIDREDDGEFVRLHDGLDGNIEYPFWVGDRIAFLSDHEGTGALYSSLADGSDLRRHTPVDGFYARHAATDGSRVVYASAGELWTLDDLDGAEPRRLDIRLGGARVDLQSYPVNAARWFGSASPDHTARGSAVAVRGGVHWVTHRSGPARALAATPGVRNRLPRTFRVDGEEWVVWVTDAEGDDALEFAPATGLAPGATARRLAAGQLGRVLHLAVAPDGSRVAVASHDGRVLLVERESGEVREVDRSEDGDASGLVFSPDSSWLAWSHPGPEPLRQLKLANTTDLSVSEATPLRFKDYSPAFTLDGKHLAFLSTRSFDPVYDEHVFDLAFVEGARPYLITLAATTPSPFGPQRHGRPFETPDREETPDSEGTPTTRIDIEGLADRIVPFPVEAARYSRLRAAKDGVLWLRHPLTGVLGASRANPEDPDPNTELERYDLAQQRVEHLGGDADHFEVSGDGKRVLLWTDGRLKVVPSDRRASGDEDSDTNITVDLGRVRQTVEPAAEWRQMFDETGRIMRDHYWRADMNGVDWDGVLDRYRPVLDRVATHDDLVDLLWEVHGELGTSHAYVTPRGGHGSGARQGLLGADLSRHEDGAWRIDRVLPSETSDPDARSPLAAPGVAVRAGDAIVAVAGQAVDPVTGPGPLLVGTAGKPVELTVSPSGGGEVRHAVVVPLADEEPLRYHAWVADRRAYVHEKSGGRLGYLHVPDMQAPGWAQIHRDLRVEVAREGLVVDVRENRGGHTSQLVVEKLARRIVGWDLPRGMRPTSYPQDAPRGPVVAVANEFSGSDGDIVNAAIKALGIGPVVGVRTWGGVIGIDSRYRLVDGTLITQPKYAFWLEGYGWGVENHGVDPDVEVPQRPQDHAAGRDPQLDEAIALALAALEETPAKTPPSLP</sequence>
<evidence type="ECO:0000250" key="1"/>
<evidence type="ECO:0000250" key="2">
    <source>
        <dbReference type="UniProtKB" id="P96086"/>
    </source>
</evidence>
<evidence type="ECO:0000256" key="3">
    <source>
        <dbReference type="SAM" id="MobiDB-lite"/>
    </source>
</evidence>
<evidence type="ECO:0000305" key="4"/>
<dbReference type="EC" id="3.4.21.-"/>
<dbReference type="EMBL" id="AL939113">
    <property type="protein sequence ID" value="CAB66227.1"/>
    <property type="molecule type" value="Genomic_DNA"/>
</dbReference>
<dbReference type="RefSeq" id="NP_626787.1">
    <property type="nucleotide sequence ID" value="NC_003888.3"/>
</dbReference>
<dbReference type="RefSeq" id="WP_011028423.1">
    <property type="nucleotide sequence ID" value="NZ_VNID01000001.1"/>
</dbReference>
<dbReference type="SMR" id="Q9RDE2"/>
<dbReference type="STRING" id="100226.gene:17760151"/>
<dbReference type="MEROPS" id="S41.006"/>
<dbReference type="PaxDb" id="100226-SCO2549"/>
<dbReference type="KEGG" id="sco:SCO2549"/>
<dbReference type="PATRIC" id="fig|100226.15.peg.2594"/>
<dbReference type="eggNOG" id="COG0793">
    <property type="taxonomic scope" value="Bacteria"/>
</dbReference>
<dbReference type="eggNOG" id="COG4946">
    <property type="taxonomic scope" value="Bacteria"/>
</dbReference>
<dbReference type="HOGENOM" id="CLU_005503_1_0_11"/>
<dbReference type="InParanoid" id="Q9RDE2"/>
<dbReference type="OrthoDB" id="9758793at2"/>
<dbReference type="PhylomeDB" id="Q9RDE2"/>
<dbReference type="Proteomes" id="UP000001973">
    <property type="component" value="Chromosome"/>
</dbReference>
<dbReference type="GO" id="GO:0005737">
    <property type="term" value="C:cytoplasm"/>
    <property type="evidence" value="ECO:0007669"/>
    <property type="project" value="UniProtKB-SubCell"/>
</dbReference>
<dbReference type="GO" id="GO:0008236">
    <property type="term" value="F:serine-type peptidase activity"/>
    <property type="evidence" value="ECO:0000250"/>
    <property type="project" value="UniProtKB"/>
</dbReference>
<dbReference type="GO" id="GO:0006508">
    <property type="term" value="P:proteolysis"/>
    <property type="evidence" value="ECO:0000250"/>
    <property type="project" value="UniProtKB"/>
</dbReference>
<dbReference type="CDD" id="cd10828">
    <property type="entry name" value="cpPDZ_Tricorn-protease"/>
    <property type="match status" value="1"/>
</dbReference>
<dbReference type="CDD" id="cd07562">
    <property type="entry name" value="Peptidase_S41_TRI"/>
    <property type="match status" value="1"/>
</dbReference>
<dbReference type="FunFam" id="2.120.10.60:FF:000001">
    <property type="entry name" value="Tricorn protease homolog"/>
    <property type="match status" value="1"/>
</dbReference>
<dbReference type="FunFam" id="2.30.42.10:FF:000221">
    <property type="entry name" value="Tricorn protease homolog"/>
    <property type="match status" value="1"/>
</dbReference>
<dbReference type="FunFam" id="3.30.750.44:FF:000011">
    <property type="entry name" value="Tricorn protease homolog"/>
    <property type="match status" value="1"/>
</dbReference>
<dbReference type="FunFam" id="3.90.226.10:FF:000053">
    <property type="entry name" value="Tricorn protease homolog"/>
    <property type="match status" value="1"/>
</dbReference>
<dbReference type="Gene3D" id="2.30.42.10">
    <property type="match status" value="1"/>
</dbReference>
<dbReference type="Gene3D" id="3.30.750.44">
    <property type="match status" value="1"/>
</dbReference>
<dbReference type="Gene3D" id="3.90.226.10">
    <property type="entry name" value="2-enoyl-CoA Hydratase, Chain A, domain 1"/>
    <property type="match status" value="1"/>
</dbReference>
<dbReference type="Gene3D" id="2.120.10.60">
    <property type="entry name" value="Tricorn protease N-terminal domain"/>
    <property type="match status" value="1"/>
</dbReference>
<dbReference type="Gene3D" id="2.130.10.10">
    <property type="entry name" value="YVTN repeat-like/Quinoprotein amine dehydrogenase"/>
    <property type="match status" value="1"/>
</dbReference>
<dbReference type="InterPro" id="IPR029045">
    <property type="entry name" value="ClpP/crotonase-like_dom_sf"/>
</dbReference>
<dbReference type="InterPro" id="IPR011659">
    <property type="entry name" value="PD40"/>
</dbReference>
<dbReference type="InterPro" id="IPR036034">
    <property type="entry name" value="PDZ_sf"/>
</dbReference>
<dbReference type="InterPro" id="IPR005151">
    <property type="entry name" value="Tail-specific_protease"/>
</dbReference>
<dbReference type="InterPro" id="IPR028204">
    <property type="entry name" value="Tricorn_C1"/>
</dbReference>
<dbReference type="InterPro" id="IPR029414">
    <property type="entry name" value="Tricorn_PDZ"/>
</dbReference>
<dbReference type="InterPro" id="IPR012393">
    <property type="entry name" value="Tricorn_protease"/>
</dbReference>
<dbReference type="InterPro" id="IPR015943">
    <property type="entry name" value="WD40/YVTN_repeat-like_dom_sf"/>
</dbReference>
<dbReference type="PANTHER" id="PTHR43253">
    <property type="entry name" value="TRICORN PROTEASE HOMOLOG 2-RELATED"/>
    <property type="match status" value="1"/>
</dbReference>
<dbReference type="PANTHER" id="PTHR43253:SF1">
    <property type="entry name" value="TRICORN PROTEASE HOMOLOG 2-RELATED"/>
    <property type="match status" value="1"/>
</dbReference>
<dbReference type="Pfam" id="PF07676">
    <property type="entry name" value="PD40"/>
    <property type="match status" value="2"/>
</dbReference>
<dbReference type="Pfam" id="PF14685">
    <property type="entry name" value="PDZ_Tricorn"/>
    <property type="match status" value="1"/>
</dbReference>
<dbReference type="Pfam" id="PF03572">
    <property type="entry name" value="Peptidase_S41"/>
    <property type="match status" value="1"/>
</dbReference>
<dbReference type="Pfam" id="PF14684">
    <property type="entry name" value="Tricorn_C1"/>
    <property type="match status" value="1"/>
</dbReference>
<dbReference type="PIRSF" id="PIRSF036421">
    <property type="entry name" value="Tricorn_protease"/>
    <property type="match status" value="1"/>
</dbReference>
<dbReference type="SMART" id="SM00245">
    <property type="entry name" value="TSPc"/>
    <property type="match status" value="1"/>
</dbReference>
<dbReference type="SUPFAM" id="SSF52096">
    <property type="entry name" value="ClpP/crotonase"/>
    <property type="match status" value="1"/>
</dbReference>
<dbReference type="SUPFAM" id="SSF50156">
    <property type="entry name" value="PDZ domain-like"/>
    <property type="match status" value="1"/>
</dbReference>
<dbReference type="SUPFAM" id="SSF69304">
    <property type="entry name" value="Tricorn protease N-terminal domain"/>
    <property type="match status" value="2"/>
</dbReference>